<comment type="function">
    <text evidence="2 3 6">Required during somitogenesis for the formation of somite boundaries. Represses the expression of genes involved in somite segmentation by acting with the corepressor tle4 to down-regulate the transcriptional activity of tbx6. May act by regulating the activity of tle4. Represses transcription of delta2, thy1 and ripply2.2/bowline itself.</text>
</comment>
<comment type="subunit">
    <text evidence="2 3">Interacts with tle4 and tbx6, and mediates interaction between these proteins.</text>
</comment>
<comment type="interaction">
    <interactant intactId="EBI-2946647">
        <id>Q25QX6</id>
    </interactant>
    <interactant intactId="EBI-2946644">
        <id>O42478</id>
        <label>tle4</label>
    </interactant>
    <organismsDiffer>false</organismsDiffer>
    <experiments>2</experiments>
</comment>
<comment type="subcellular location">
    <subcellularLocation>
        <location evidence="2">Nucleus</location>
    </subcellularLocation>
</comment>
<comment type="tissue specificity">
    <text evidence="2 4 6">Expressed in the presomitic mesoderm (PSM) in the anterior halves of somitomeres S-I, S-II and S-III.</text>
</comment>
<comment type="induction">
    <text evidence="4 5 6">Part of a negative feedback loop during somitogenesis. Expression is activated by tbx6 together with thy1 and tcf3.</text>
</comment>
<comment type="domain">
    <text>The ripply homology domain is required for transcriptional repression.</text>
</comment>
<comment type="domain">
    <text evidence="2 3">The WRPW motif is required for binding to tle/groucho proteins and transcriptional repression.</text>
</comment>
<comment type="similarity">
    <text evidence="7">Belongs to the ripply family.</text>
</comment>
<sequence length="153" mass="17754">MDNINTTIDICGAASGLPSPGDSNSKRLRHRKYLPQRWKCEPRGPARTETQRPQTLFWRPWLLKSHKPKTQAHPYARGLRENPQEQKPVEYNHPVRLFWPKSKLLDNTYQEAADLLRNFPVQATISLYNDSESDTDNEEDSSEEEQDSGFESE</sequence>
<keyword id="KW-0217">Developmental protein</keyword>
<keyword id="KW-0539">Nucleus</keyword>
<keyword id="KW-1185">Reference proteome</keyword>
<keyword id="KW-0678">Repressor</keyword>
<keyword id="KW-0804">Transcription</keyword>
<keyword id="KW-0805">Transcription regulation</keyword>
<organism>
    <name type="scientific">Xenopus laevis</name>
    <name type="common">African clawed frog</name>
    <dbReference type="NCBI Taxonomy" id="8355"/>
    <lineage>
        <taxon>Eukaryota</taxon>
        <taxon>Metazoa</taxon>
        <taxon>Chordata</taxon>
        <taxon>Craniata</taxon>
        <taxon>Vertebrata</taxon>
        <taxon>Euteleostomi</taxon>
        <taxon>Amphibia</taxon>
        <taxon>Batrachia</taxon>
        <taxon>Anura</taxon>
        <taxon>Pipoidea</taxon>
        <taxon>Pipidae</taxon>
        <taxon>Xenopodinae</taxon>
        <taxon>Xenopus</taxon>
        <taxon>Xenopus</taxon>
    </lineage>
</organism>
<accession>Q25QX6</accession>
<accession>A8QWV4</accession>
<reference evidence="7 8" key="1">
    <citation type="journal article" date="2006" name="Int. J. Dev. Biol.">
        <title>Bowline, a novel protein localized to the presomitic mesoderm, interacts with Groucho/TLE in Xenopus.</title>
        <authorList>
            <person name="Kondow A."/>
            <person name="Hitachi K."/>
            <person name="Ikegame T."/>
            <person name="Asashima M."/>
        </authorList>
    </citation>
    <scope>NUCLEOTIDE SEQUENCE [MRNA]</scope>
    <scope>FUNCTION</scope>
    <scope>INTERACTION WITH TLE4</scope>
    <scope>SUBCELLULAR LOCATION</scope>
    <scope>TISSUE SPECIFICITY</scope>
    <scope>DOMAIN</scope>
    <scope>MUTAGENESIS OF 58-TRP--TRP-61</scope>
    <source>
        <tissue evidence="2">Mesoderm</tissue>
    </source>
</reference>
<reference key="2">
    <citation type="journal article" date="2008" name="Dev. Biol.">
        <title>Tbx6, Thylacine1, and E47 synergistically activate bowline expression in Xenopus somitogenesis.</title>
        <authorList>
            <person name="Hitachi K."/>
            <person name="Kondow A."/>
            <person name="Danno H."/>
            <person name="Inui M."/>
            <person name="Uchiyama H."/>
            <person name="Asashima M."/>
        </authorList>
    </citation>
    <scope>NUCLEOTIDE SEQUENCE [GENOMIC DNA]</scope>
    <scope>TISSUE SPECIFICITY</scope>
    <scope>INDUCTION</scope>
</reference>
<reference key="3">
    <citation type="submission" date="2008-11" db="EMBL/GenBank/DDBJ databases">
        <authorList>
            <consortium name="NIH - Xenopus Gene Collection (XGC) project"/>
        </authorList>
    </citation>
    <scope>NUCLEOTIDE SEQUENCE [LARGE SCALE MRNA]</scope>
    <source>
        <tissue>Gastrula</tissue>
    </source>
</reference>
<reference evidence="7" key="4">
    <citation type="journal article" date="2007" name="Biochem. Biophys. Res. Commun.">
        <title>Bowline mediates association of the transcriptional corepressor XGrg-4 with Tbx6 during somitogenesis in Xenopus.</title>
        <authorList>
            <person name="Kondow A."/>
            <person name="Hitachi K."/>
            <person name="Okabayashi K."/>
            <person name="Hayashi N."/>
            <person name="Asashima M."/>
        </authorList>
    </citation>
    <scope>FUNCTION</scope>
    <scope>INTERACTION WITH TBX6 AND TLE4</scope>
    <scope>DOMAIN</scope>
    <scope>MUTAGENESIS OF ARG-59 AND 58-TRP--TRP-61</scope>
</reference>
<reference key="5">
    <citation type="journal article" date="2008" name="Biochem. Biophys. Res. Commun.">
        <title>Physical interaction between Tbx6 and mespb is indispensable for the activation of bowline expression during Xenopus somitogenesis.</title>
        <authorList>
            <person name="Hitachi K."/>
            <person name="Danno H."/>
            <person name="Kondow A."/>
            <person name="Ohnuma K."/>
            <person name="Uchiyama H."/>
            <person name="Ishiura S."/>
            <person name="Kurisaki A."/>
            <person name="Asashima M."/>
        </authorList>
    </citation>
    <scope>INDUCTION</scope>
</reference>
<reference key="6">
    <citation type="journal article" date="2009" name="Int. J. Dev. Biol.">
        <title>The Xenopus Bowline/Ripply family proteins negatively regulate the transcriptional activity of T-box transcription factors.</title>
        <authorList>
            <person name="Hitachi K."/>
            <person name="Danno H."/>
            <person name="Tazumi S."/>
            <person name="Aihara Y."/>
            <person name="Uchiyama H."/>
            <person name="Okabayashi K."/>
            <person name="Kondow A."/>
            <person name="Asashima M."/>
        </authorList>
    </citation>
    <scope>FUNCTION</scope>
    <scope>TISSUE SPECIFICITY</scope>
    <scope>INDUCTION</scope>
</reference>
<evidence type="ECO:0000256" key="1">
    <source>
        <dbReference type="SAM" id="MobiDB-lite"/>
    </source>
</evidence>
<evidence type="ECO:0000269" key="2">
    <source>
    </source>
</evidence>
<evidence type="ECO:0000269" key="3">
    <source>
    </source>
</evidence>
<evidence type="ECO:0000269" key="4">
    <source>
    </source>
</evidence>
<evidence type="ECO:0000269" key="5">
    <source>
    </source>
</evidence>
<evidence type="ECO:0000269" key="6">
    <source>
    </source>
</evidence>
<evidence type="ECO:0000305" key="7"/>
<evidence type="ECO:0000312" key="8">
    <source>
        <dbReference type="EMBL" id="BAE86929.1"/>
    </source>
</evidence>
<name>BOWL_XENLA</name>
<protein>
    <recommendedName>
        <fullName>Protein ripply2.2</fullName>
    </recommendedName>
    <alternativeName>
        <fullName>Protein bowline</fullName>
    </alternativeName>
</protein>
<feature type="chain" id="PRO_0000307765" description="Protein ripply2.2">
    <location>
        <begin position="1"/>
        <end position="153"/>
    </location>
</feature>
<feature type="region of interest" description="Ripply homology domain" evidence="3">
    <location>
        <begin position="93"/>
        <end position="128"/>
    </location>
</feature>
<feature type="region of interest" description="Disordered" evidence="1">
    <location>
        <begin position="127"/>
        <end position="153"/>
    </location>
</feature>
<feature type="short sequence motif" description="WRPW motif; required for transcriptional repression and interaction with tle4" evidence="2 3">
    <location>
        <begin position="58"/>
        <end position="61"/>
    </location>
</feature>
<feature type="compositionally biased region" description="Acidic residues" evidence="1">
    <location>
        <begin position="131"/>
        <end position="153"/>
    </location>
</feature>
<feature type="mutagenesis site" description="Disrupts transcriptional repression and interaction with tle4." evidence="2 3">
    <original>WRPW</original>
    <variation>GGGG</variation>
    <location>
        <begin position="58"/>
        <end position="61"/>
    </location>
</feature>
<feature type="mutagenesis site" description="Disrupts transcriptional repression." evidence="2 3">
    <location>
        <begin position="58"/>
        <end position="61"/>
    </location>
</feature>
<feature type="mutagenesis site" description="Disrupts transcriptional repression." evidence="3">
    <original>R</original>
    <variation>E</variation>
    <location>
        <position position="59"/>
    </location>
</feature>
<dbReference type="EMBL" id="AB105905">
    <property type="protein sequence ID" value="BAE86929.1"/>
    <property type="molecule type" value="mRNA"/>
</dbReference>
<dbReference type="EMBL" id="AB274961">
    <property type="protein sequence ID" value="BAF91354.1"/>
    <property type="molecule type" value="Genomic_DNA"/>
</dbReference>
<dbReference type="EMBL" id="BC169341">
    <property type="protein sequence ID" value="AAI69341.1"/>
    <property type="molecule type" value="mRNA"/>
</dbReference>
<dbReference type="EMBL" id="BC169343">
    <property type="protein sequence ID" value="AAI69343.1"/>
    <property type="molecule type" value="mRNA"/>
</dbReference>
<dbReference type="RefSeq" id="NP_001089164.1">
    <property type="nucleotide sequence ID" value="NM_001095695.1"/>
</dbReference>
<dbReference type="IntAct" id="Q25QX6">
    <property type="interactions" value="1"/>
</dbReference>
<dbReference type="GeneID" id="734201"/>
<dbReference type="KEGG" id="xla:734201"/>
<dbReference type="AGR" id="Xenbase:XB-GENE-6251689"/>
<dbReference type="CTD" id="734201"/>
<dbReference type="Xenbase" id="XB-GENE-6251689">
    <property type="gene designation" value="ripply2.2.S"/>
</dbReference>
<dbReference type="OrthoDB" id="5978888at2759"/>
<dbReference type="Proteomes" id="UP000186698">
    <property type="component" value="Chromosome 5S"/>
</dbReference>
<dbReference type="Bgee" id="734201">
    <property type="expression patterns" value="Expressed in neurula embryo and 1 other cell type or tissue"/>
</dbReference>
<dbReference type="GO" id="GO:0005634">
    <property type="term" value="C:nucleus"/>
    <property type="evidence" value="ECO:0000314"/>
    <property type="project" value="UniProtKB"/>
</dbReference>
<dbReference type="GO" id="GO:0017053">
    <property type="term" value="C:transcription repressor complex"/>
    <property type="evidence" value="ECO:0000353"/>
    <property type="project" value="UniProtKB"/>
</dbReference>
<dbReference type="GO" id="GO:0009880">
    <property type="term" value="P:embryonic pattern specification"/>
    <property type="evidence" value="ECO:0000318"/>
    <property type="project" value="GO_Central"/>
</dbReference>
<dbReference type="GO" id="GO:0043433">
    <property type="term" value="P:negative regulation of DNA-binding transcription factor activity"/>
    <property type="evidence" value="ECO:0000314"/>
    <property type="project" value="UniProtKB"/>
</dbReference>
<dbReference type="GO" id="GO:0000122">
    <property type="term" value="P:negative regulation of transcription by RNA polymerase II"/>
    <property type="evidence" value="ECO:0000314"/>
    <property type="project" value="UniProtKB"/>
</dbReference>
<dbReference type="GO" id="GO:0001756">
    <property type="term" value="P:somitogenesis"/>
    <property type="evidence" value="ECO:0000315"/>
    <property type="project" value="UniProtKB"/>
</dbReference>
<dbReference type="InterPro" id="IPR028127">
    <property type="entry name" value="Ripply_fam"/>
</dbReference>
<dbReference type="PANTHER" id="PTHR16770">
    <property type="entry name" value="PROTEIN RIPPLY-LIKE"/>
    <property type="match status" value="1"/>
</dbReference>
<dbReference type="PANTHER" id="PTHR16770:SF3">
    <property type="entry name" value="PROTEIN RIPPLY2"/>
    <property type="match status" value="1"/>
</dbReference>
<dbReference type="Pfam" id="PF14998">
    <property type="entry name" value="Ripply"/>
    <property type="match status" value="1"/>
</dbReference>
<gene>
    <name type="primary">ripply2.2</name>
    <name type="synonym">bowline</name>
    <name type="synonym">ripply2</name>
</gene>
<proteinExistence type="evidence at protein level"/>